<accession>Q30YQ4</accession>
<dbReference type="EMBL" id="CP000112">
    <property type="protein sequence ID" value="ABB39192.1"/>
    <property type="molecule type" value="Genomic_DNA"/>
</dbReference>
<dbReference type="RefSeq" id="WP_011368265.1">
    <property type="nucleotide sequence ID" value="NC_007519.1"/>
</dbReference>
<dbReference type="STRING" id="207559.Dde_2395"/>
<dbReference type="KEGG" id="dde:Dde_2395"/>
<dbReference type="eggNOG" id="COG0759">
    <property type="taxonomic scope" value="Bacteria"/>
</dbReference>
<dbReference type="HOGENOM" id="CLU_144811_6_0_7"/>
<dbReference type="Proteomes" id="UP000002710">
    <property type="component" value="Chromosome"/>
</dbReference>
<dbReference type="GO" id="GO:0005886">
    <property type="term" value="C:plasma membrane"/>
    <property type="evidence" value="ECO:0007669"/>
    <property type="project" value="UniProtKB-SubCell"/>
</dbReference>
<dbReference type="HAMAP" id="MF_00386">
    <property type="entry name" value="UPF0161_YidD"/>
    <property type="match status" value="1"/>
</dbReference>
<dbReference type="InterPro" id="IPR002696">
    <property type="entry name" value="Membr_insert_effic_factor_YidD"/>
</dbReference>
<dbReference type="NCBIfam" id="TIGR00278">
    <property type="entry name" value="membrane protein insertion efficiency factor YidD"/>
    <property type="match status" value="1"/>
</dbReference>
<dbReference type="PANTHER" id="PTHR33383">
    <property type="entry name" value="MEMBRANE PROTEIN INSERTION EFFICIENCY FACTOR-RELATED"/>
    <property type="match status" value="1"/>
</dbReference>
<dbReference type="PANTHER" id="PTHR33383:SF1">
    <property type="entry name" value="MEMBRANE PROTEIN INSERTION EFFICIENCY FACTOR-RELATED"/>
    <property type="match status" value="1"/>
</dbReference>
<dbReference type="Pfam" id="PF01809">
    <property type="entry name" value="YidD"/>
    <property type="match status" value="1"/>
</dbReference>
<dbReference type="SMART" id="SM01234">
    <property type="entry name" value="Haemolytic"/>
    <property type="match status" value="1"/>
</dbReference>
<comment type="function">
    <text evidence="1">Could be involved in insertion of integral membrane proteins into the membrane.</text>
</comment>
<comment type="subcellular location">
    <subcellularLocation>
        <location evidence="1">Cell inner membrane</location>
        <topology evidence="1">Peripheral membrane protein</topology>
        <orientation evidence="1">Cytoplasmic side</orientation>
    </subcellularLocation>
</comment>
<comment type="similarity">
    <text evidence="1">Belongs to the UPF0161 family.</text>
</comment>
<evidence type="ECO:0000255" key="1">
    <source>
        <dbReference type="HAMAP-Rule" id="MF_00386"/>
    </source>
</evidence>
<protein>
    <recommendedName>
        <fullName evidence="1">Putative membrane protein insertion efficiency factor</fullName>
    </recommendedName>
</protein>
<reference key="1">
    <citation type="journal article" date="2011" name="J. Bacteriol.">
        <title>Complete genome sequence and updated annotation of Desulfovibrio alaskensis G20.</title>
        <authorList>
            <person name="Hauser L.J."/>
            <person name="Land M.L."/>
            <person name="Brown S.D."/>
            <person name="Larimer F."/>
            <person name="Keller K.L."/>
            <person name="Rapp-Giles B.J."/>
            <person name="Price M.N."/>
            <person name="Lin M."/>
            <person name="Bruce D.C."/>
            <person name="Detter J.C."/>
            <person name="Tapia R."/>
            <person name="Han C.S."/>
            <person name="Goodwin L.A."/>
            <person name="Cheng J.F."/>
            <person name="Pitluck S."/>
            <person name="Copeland A."/>
            <person name="Lucas S."/>
            <person name="Nolan M."/>
            <person name="Lapidus A.L."/>
            <person name="Palumbo A.V."/>
            <person name="Wall J.D."/>
        </authorList>
    </citation>
    <scope>NUCLEOTIDE SEQUENCE [LARGE SCALE GENOMIC DNA]</scope>
    <source>
        <strain>ATCC BAA-1058 / DSM 17464 / G20</strain>
    </source>
</reference>
<organism>
    <name type="scientific">Oleidesulfovibrio alaskensis (strain ATCC BAA-1058 / DSM 17464 / G20)</name>
    <name type="common">Desulfovibrio alaskensis</name>
    <dbReference type="NCBI Taxonomy" id="207559"/>
    <lineage>
        <taxon>Bacteria</taxon>
        <taxon>Pseudomonadati</taxon>
        <taxon>Thermodesulfobacteriota</taxon>
        <taxon>Desulfovibrionia</taxon>
        <taxon>Desulfovibrionales</taxon>
        <taxon>Desulfovibrionaceae</taxon>
        <taxon>Oleidesulfovibrio</taxon>
    </lineage>
</organism>
<proteinExistence type="inferred from homology"/>
<name>YIDD_OLEA2</name>
<sequence>MTIELRKIAILPIRFYQRFISPLFPPSCRFVPTCSAYAAEAVLRHGIIKGGFLALRRILRCNPLCAGGYDPVPESRHQDAKRVRSC</sequence>
<keyword id="KW-0997">Cell inner membrane</keyword>
<keyword id="KW-1003">Cell membrane</keyword>
<keyword id="KW-0472">Membrane</keyword>
<keyword id="KW-1185">Reference proteome</keyword>
<feature type="chain" id="PRO_0000253105" description="Putative membrane protein insertion efficiency factor">
    <location>
        <begin position="1"/>
        <end position="86"/>
    </location>
</feature>
<gene>
    <name type="ordered locus">Dde_2395</name>
</gene>